<reference key="1">
    <citation type="submission" date="2005-09" db="EMBL/GenBank/DDBJ databases">
        <authorList>
            <consortium name="NIH - Mammalian Gene Collection (MGC) project"/>
        </authorList>
    </citation>
    <scope>NUCLEOTIDE SEQUENCE [LARGE SCALE MRNA]</scope>
    <source>
        <strain>Hereford</strain>
        <tissue>Hypothalamus</tissue>
    </source>
</reference>
<proteinExistence type="inferred from homology"/>
<evidence type="ECO:0000250" key="1">
    <source>
        <dbReference type="UniProtKB" id="Q9Y4Y9"/>
    </source>
</evidence>
<evidence type="ECO:0000255" key="2">
    <source>
        <dbReference type="PROSITE-ProRule" id="PRU01346"/>
    </source>
</evidence>
<evidence type="ECO:0000305" key="3"/>
<sequence length="91" mass="9937">MAANATTNPSQLLPLELVDKCIGSRIHIVMKSDKEIVGTLLGFDDFVNMVLEDVTEFEITPEGRRITKLDQILLNGNNITMLVPGGEGPEV</sequence>
<gene>
    <name type="primary">LSM5</name>
</gene>
<dbReference type="EMBL" id="BC105404">
    <property type="protein sequence ID" value="AAI05405.1"/>
    <property type="molecule type" value="mRNA"/>
</dbReference>
<dbReference type="RefSeq" id="NP_001040018.1">
    <property type="nucleotide sequence ID" value="NM_001046553.2"/>
</dbReference>
<dbReference type="SMR" id="Q2HJH0"/>
<dbReference type="FunCoup" id="Q2HJH0">
    <property type="interactions" value="2342"/>
</dbReference>
<dbReference type="STRING" id="9913.ENSBTAP00000003010"/>
<dbReference type="PaxDb" id="9913-ENSBTAP00000003010"/>
<dbReference type="Ensembl" id="ENSBTAT00000086189.2">
    <property type="protein sequence ID" value="ENSBTAP00000062464.1"/>
    <property type="gene ID" value="ENSBTAG00000002332.4"/>
</dbReference>
<dbReference type="GeneID" id="615136"/>
<dbReference type="KEGG" id="bta:615136"/>
<dbReference type="CTD" id="23658"/>
<dbReference type="VEuPathDB" id="HostDB:ENSBTAG00000002332"/>
<dbReference type="VGNC" id="VGNC:31057">
    <property type="gene designation" value="LSM5"/>
</dbReference>
<dbReference type="eggNOG" id="KOG1775">
    <property type="taxonomic scope" value="Eukaryota"/>
</dbReference>
<dbReference type="GeneTree" id="ENSGT00390000001455"/>
<dbReference type="HOGENOM" id="CLU_076902_6_1_1"/>
<dbReference type="InParanoid" id="Q2HJH0"/>
<dbReference type="OMA" id="YETTPQG"/>
<dbReference type="OrthoDB" id="429711at2759"/>
<dbReference type="TreeFam" id="TF313575"/>
<dbReference type="Reactome" id="R-BTA-430039">
    <property type="pathway name" value="mRNA decay by 5' to 3' exoribonuclease"/>
</dbReference>
<dbReference type="Reactome" id="R-BTA-72163">
    <property type="pathway name" value="mRNA Splicing - Major Pathway"/>
</dbReference>
<dbReference type="Proteomes" id="UP000009136">
    <property type="component" value="Chromosome 4"/>
</dbReference>
<dbReference type="Bgee" id="ENSBTAG00000002332">
    <property type="expression patterns" value="Expressed in semen and 108 other cell types or tissues"/>
</dbReference>
<dbReference type="GO" id="GO:1990726">
    <property type="term" value="C:Lsm1-7-Pat1 complex"/>
    <property type="evidence" value="ECO:0000318"/>
    <property type="project" value="GO_Central"/>
</dbReference>
<dbReference type="GO" id="GO:0120115">
    <property type="term" value="C:Lsm2-8 complex"/>
    <property type="evidence" value="ECO:0000250"/>
    <property type="project" value="UniProtKB"/>
</dbReference>
<dbReference type="GO" id="GO:0005634">
    <property type="term" value="C:nucleus"/>
    <property type="evidence" value="ECO:0000250"/>
    <property type="project" value="UniProtKB"/>
</dbReference>
<dbReference type="GO" id="GO:0071005">
    <property type="term" value="C:U2-type precatalytic spliceosome"/>
    <property type="evidence" value="ECO:0000250"/>
    <property type="project" value="UniProtKB"/>
</dbReference>
<dbReference type="GO" id="GO:0046540">
    <property type="term" value="C:U4/U6 x U5 tri-snRNP complex"/>
    <property type="evidence" value="ECO:0000250"/>
    <property type="project" value="UniProtKB"/>
</dbReference>
<dbReference type="GO" id="GO:0005688">
    <property type="term" value="C:U6 snRNP"/>
    <property type="evidence" value="ECO:0000318"/>
    <property type="project" value="GO_Central"/>
</dbReference>
<dbReference type="GO" id="GO:0003723">
    <property type="term" value="F:RNA binding"/>
    <property type="evidence" value="ECO:0007669"/>
    <property type="project" value="UniProtKB-KW"/>
</dbReference>
<dbReference type="GO" id="GO:0000398">
    <property type="term" value="P:mRNA splicing, via spliceosome"/>
    <property type="evidence" value="ECO:0000250"/>
    <property type="project" value="UniProtKB"/>
</dbReference>
<dbReference type="CDD" id="cd01732">
    <property type="entry name" value="LSm5"/>
    <property type="match status" value="1"/>
</dbReference>
<dbReference type="FunFam" id="2.30.30.100:FF:000003">
    <property type="entry name" value="U6 snRNA-associated Sm-like protein LSm5"/>
    <property type="match status" value="1"/>
</dbReference>
<dbReference type="Gene3D" id="2.30.30.100">
    <property type="match status" value="1"/>
</dbReference>
<dbReference type="InterPro" id="IPR033871">
    <property type="entry name" value="LSm5"/>
</dbReference>
<dbReference type="InterPro" id="IPR010920">
    <property type="entry name" value="LSM_dom_sf"/>
</dbReference>
<dbReference type="InterPro" id="IPR047575">
    <property type="entry name" value="Sm"/>
</dbReference>
<dbReference type="InterPro" id="IPR001163">
    <property type="entry name" value="Sm_dom_euk/arc"/>
</dbReference>
<dbReference type="PANTHER" id="PTHR20971">
    <property type="entry name" value="U6 SNRNA-ASSOCIATED PROTEIN"/>
    <property type="match status" value="1"/>
</dbReference>
<dbReference type="PANTHER" id="PTHR20971:SF0">
    <property type="entry name" value="U6 SNRNA-ASSOCIATED SM-LIKE PROTEIN LSM5"/>
    <property type="match status" value="1"/>
</dbReference>
<dbReference type="Pfam" id="PF01423">
    <property type="entry name" value="LSM"/>
    <property type="match status" value="1"/>
</dbReference>
<dbReference type="SMART" id="SM00651">
    <property type="entry name" value="Sm"/>
    <property type="match status" value="1"/>
</dbReference>
<dbReference type="SUPFAM" id="SSF50182">
    <property type="entry name" value="Sm-like ribonucleoproteins"/>
    <property type="match status" value="1"/>
</dbReference>
<dbReference type="PROSITE" id="PS52002">
    <property type="entry name" value="SM"/>
    <property type="match status" value="1"/>
</dbReference>
<comment type="function">
    <text evidence="1">Plays a role in pre-mRNA splicing as component of the U4/U6-U5 tri-snRNP complex that is involved in spliceosome assembly, and as component of the precatalytic spliceosome (spliceosome B complex). The heptameric LSM2-8 complex binds specifically to the 3'-terminal U-tract of U6 snRNA.</text>
</comment>
<comment type="subunit">
    <text evidence="1">Component of the precatalytic spliceosome (spliceosome B complex). Component of the U4/U6-U5 tri-snRNP complex, a building block of the precatalytic spliceosome (spliceosome B complex). The U4/U6-U5 tri-snRNP complex is composed of the U4, U6 and U5 snRNAs and at least PRPF3, PRPF4, PRPF6, PRPF8, PRPF31, SNRNP200, TXNL4A, SNRNP40, SNRPB, SNRPD1, SNRPD2, SNRPD3, SNRPE, SNRPF, SNRPG, DDX23, CD2BP2, PPIH, SNU13, EFTUD2, SART1 and USP39, plus LSM2, LSM3, LSM4, LSM5, LSM6, LSM7 and LSM8. LSM2, LSM3, LSM4, LSM5, LSM6, LSM7 and LSM8 form a heptameric, ring-shaped subcomplex (the LSM2-8 complex) that is part of the U4/U6-U5 tri-snRNP complex and the precatalytic spliceosome.</text>
</comment>
<comment type="subcellular location">
    <subcellularLocation>
        <location evidence="1">Nucleus</location>
    </subcellularLocation>
</comment>
<comment type="similarity">
    <text evidence="3">Belongs to the snRNP Sm proteins family.</text>
</comment>
<keyword id="KW-0007">Acetylation</keyword>
<keyword id="KW-0507">mRNA processing</keyword>
<keyword id="KW-0508">mRNA splicing</keyword>
<keyword id="KW-0539">Nucleus</keyword>
<keyword id="KW-1185">Reference proteome</keyword>
<keyword id="KW-0687">Ribonucleoprotein</keyword>
<keyword id="KW-0694">RNA-binding</keyword>
<keyword id="KW-0747">Spliceosome</keyword>
<feature type="initiator methionine" description="Removed" evidence="1">
    <location>
        <position position="1"/>
    </location>
</feature>
<feature type="chain" id="PRO_0000238670" description="U6 snRNA-associated Sm-like protein LSm5">
    <location>
        <begin position="2"/>
        <end position="91"/>
    </location>
</feature>
<feature type="domain" description="Sm" evidence="2">
    <location>
        <begin position="13"/>
        <end position="88"/>
    </location>
</feature>
<feature type="modified residue" description="N-acetylalanine" evidence="1">
    <location>
        <position position="2"/>
    </location>
</feature>
<name>LSM5_BOVIN</name>
<accession>Q2HJH0</accession>
<protein>
    <recommendedName>
        <fullName>U6 snRNA-associated Sm-like protein LSm5</fullName>
    </recommendedName>
</protein>
<organism>
    <name type="scientific">Bos taurus</name>
    <name type="common">Bovine</name>
    <dbReference type="NCBI Taxonomy" id="9913"/>
    <lineage>
        <taxon>Eukaryota</taxon>
        <taxon>Metazoa</taxon>
        <taxon>Chordata</taxon>
        <taxon>Craniata</taxon>
        <taxon>Vertebrata</taxon>
        <taxon>Euteleostomi</taxon>
        <taxon>Mammalia</taxon>
        <taxon>Eutheria</taxon>
        <taxon>Laurasiatheria</taxon>
        <taxon>Artiodactyla</taxon>
        <taxon>Ruminantia</taxon>
        <taxon>Pecora</taxon>
        <taxon>Bovidae</taxon>
        <taxon>Bovinae</taxon>
        <taxon>Bos</taxon>
    </lineage>
</organism>